<proteinExistence type="inferred from homology"/>
<protein>
    <recommendedName>
        <fullName evidence="1">DNA ligase</fullName>
        <ecNumber evidence="1">6.5.1.2</ecNumber>
    </recommendedName>
    <alternativeName>
        <fullName evidence="1">Polydeoxyribonucleotide synthase [NAD(+)]</fullName>
    </alternativeName>
</protein>
<reference key="1">
    <citation type="submission" date="2007-06" db="EMBL/GenBank/DDBJ databases">
        <title>Complete sequence of chromosome of Staphylococcus aureus subsp. aureus JH1.</title>
        <authorList>
            <consortium name="US DOE Joint Genome Institute"/>
            <person name="Copeland A."/>
            <person name="Lucas S."/>
            <person name="Lapidus A."/>
            <person name="Barry K."/>
            <person name="Detter J.C."/>
            <person name="Glavina del Rio T."/>
            <person name="Hammon N."/>
            <person name="Israni S."/>
            <person name="Dalin E."/>
            <person name="Tice H."/>
            <person name="Pitluck S."/>
            <person name="Chain P."/>
            <person name="Malfatti S."/>
            <person name="Shin M."/>
            <person name="Vergez L."/>
            <person name="Schmutz J."/>
            <person name="Larimer F."/>
            <person name="Land M."/>
            <person name="Hauser L."/>
            <person name="Kyrpides N."/>
            <person name="Ivanova N."/>
            <person name="Tomasz A."/>
            <person name="Richardson P."/>
        </authorList>
    </citation>
    <scope>NUCLEOTIDE SEQUENCE [LARGE SCALE GENOMIC DNA]</scope>
    <source>
        <strain>JH1</strain>
    </source>
</reference>
<sequence>MADLSSRVNELHDLLNQYSYEYYVEDNPSVPDSEYDKLLHELIKIEEEHPEYKTVDSPTVRVGGEAQASFKKVNHDTPMLSLGNAFNEDDLRKFDQRIREQIGNVEYMCELKIDGLAVSLKYVDGYFVQGLTRGDGTTGEDITENLKTIHAIPLKMKEPLNVEVRGEAYMPRRSFLRLNEEKEKNDEQLFANPRNAAAGSLRQLDSKLTAKRKLSVFIYSVNDFTDFNARSQSEALDELDKLGFTTNKNRARVNNIDGVLEYIEKWTSQRESLPYDIDGIVIKVNDLDQQDEMGFTQKSPRWAIAYKFPAEEVVTKLLDIELSIGRTGVVTPTAILEPVKVAGTTVSRASLHNEDLIHDRDIRIGDSVVVKKAGDIIPEVVRSIPERRPEDAVTYHMPTHCPSCGHELVRIEGEVALRCINPKCQAQLVEGLIHFVSRQAMNIDGLGTKIIQQLYQSELIKDVADIFYLTEEDLLPLDRMGQKKVDNLLAAIQQAKDNSLENLLFGLGIRHLGVKASQVLAEKYETIDRLLTVTEAELVEIHDIGDKVAQSVVTYLENEDIRALIQKLKDKHVNMIYKGIKTSDIEGHPEFSGKTIVLTGKLHQMTRNEASKWLASQGAKVTSSVTKNTDVVIAGEDAGSKLTKAQSLGIEIWTEQQFVDKQNELNS</sequence>
<comment type="function">
    <text evidence="1">DNA ligase that catalyzes the formation of phosphodiester linkages between 5'-phosphoryl and 3'-hydroxyl groups in double-stranded DNA using NAD as a coenzyme and as the energy source for the reaction. It is essential for DNA replication and repair of damaged DNA.</text>
</comment>
<comment type="catalytic activity">
    <reaction evidence="1">
        <text>NAD(+) + (deoxyribonucleotide)n-3'-hydroxyl + 5'-phospho-(deoxyribonucleotide)m = (deoxyribonucleotide)n+m + AMP + beta-nicotinamide D-nucleotide.</text>
        <dbReference type="EC" id="6.5.1.2"/>
    </reaction>
</comment>
<comment type="cofactor">
    <cofactor evidence="1">
        <name>Mg(2+)</name>
        <dbReference type="ChEBI" id="CHEBI:18420"/>
    </cofactor>
    <cofactor evidence="1">
        <name>Mn(2+)</name>
        <dbReference type="ChEBI" id="CHEBI:29035"/>
    </cofactor>
</comment>
<comment type="similarity">
    <text evidence="1">Belongs to the NAD-dependent DNA ligase family. LigA subfamily.</text>
</comment>
<feature type="chain" id="PRO_0000340386" description="DNA ligase">
    <location>
        <begin position="1"/>
        <end position="667"/>
    </location>
</feature>
<feature type="domain" description="BRCT" evidence="1">
    <location>
        <begin position="586"/>
        <end position="667"/>
    </location>
</feature>
<feature type="active site" description="N6-AMP-lysine intermediate" evidence="1">
    <location>
        <position position="112"/>
    </location>
</feature>
<feature type="binding site" evidence="1">
    <location>
        <begin position="32"/>
        <end position="36"/>
    </location>
    <ligand>
        <name>NAD(+)</name>
        <dbReference type="ChEBI" id="CHEBI:57540"/>
    </ligand>
</feature>
<feature type="binding site" evidence="1">
    <location>
        <begin position="81"/>
        <end position="82"/>
    </location>
    <ligand>
        <name>NAD(+)</name>
        <dbReference type="ChEBI" id="CHEBI:57540"/>
    </ligand>
</feature>
<feature type="binding site" evidence="1">
    <location>
        <position position="110"/>
    </location>
    <ligand>
        <name>NAD(+)</name>
        <dbReference type="ChEBI" id="CHEBI:57540"/>
    </ligand>
</feature>
<feature type="binding site" evidence="1">
    <location>
        <position position="133"/>
    </location>
    <ligand>
        <name>NAD(+)</name>
        <dbReference type="ChEBI" id="CHEBI:57540"/>
    </ligand>
</feature>
<feature type="binding site" evidence="1">
    <location>
        <position position="167"/>
    </location>
    <ligand>
        <name>NAD(+)</name>
        <dbReference type="ChEBI" id="CHEBI:57540"/>
    </ligand>
</feature>
<feature type="binding site" evidence="1">
    <location>
        <position position="283"/>
    </location>
    <ligand>
        <name>NAD(+)</name>
        <dbReference type="ChEBI" id="CHEBI:57540"/>
    </ligand>
</feature>
<feature type="binding site" evidence="1">
    <location>
        <position position="307"/>
    </location>
    <ligand>
        <name>NAD(+)</name>
        <dbReference type="ChEBI" id="CHEBI:57540"/>
    </ligand>
</feature>
<feature type="binding site" evidence="1">
    <location>
        <position position="401"/>
    </location>
    <ligand>
        <name>Zn(2+)</name>
        <dbReference type="ChEBI" id="CHEBI:29105"/>
    </ligand>
</feature>
<feature type="binding site" evidence="1">
    <location>
        <position position="404"/>
    </location>
    <ligand>
        <name>Zn(2+)</name>
        <dbReference type="ChEBI" id="CHEBI:29105"/>
    </ligand>
</feature>
<feature type="binding site" evidence="1">
    <location>
        <position position="419"/>
    </location>
    <ligand>
        <name>Zn(2+)</name>
        <dbReference type="ChEBI" id="CHEBI:29105"/>
    </ligand>
</feature>
<feature type="binding site" evidence="1">
    <location>
        <position position="424"/>
    </location>
    <ligand>
        <name>Zn(2+)</name>
        <dbReference type="ChEBI" id="CHEBI:29105"/>
    </ligand>
</feature>
<gene>
    <name evidence="1" type="primary">ligA</name>
    <name type="ordered locus">SaurJH1_1993</name>
</gene>
<evidence type="ECO:0000255" key="1">
    <source>
        <dbReference type="HAMAP-Rule" id="MF_01588"/>
    </source>
</evidence>
<name>DNLJ_STAA2</name>
<accession>A6U309</accession>
<keyword id="KW-0227">DNA damage</keyword>
<keyword id="KW-0234">DNA repair</keyword>
<keyword id="KW-0235">DNA replication</keyword>
<keyword id="KW-0436">Ligase</keyword>
<keyword id="KW-0460">Magnesium</keyword>
<keyword id="KW-0464">Manganese</keyword>
<keyword id="KW-0479">Metal-binding</keyword>
<keyword id="KW-0520">NAD</keyword>
<keyword id="KW-0862">Zinc</keyword>
<organism>
    <name type="scientific">Staphylococcus aureus (strain JH1)</name>
    <dbReference type="NCBI Taxonomy" id="359787"/>
    <lineage>
        <taxon>Bacteria</taxon>
        <taxon>Bacillati</taxon>
        <taxon>Bacillota</taxon>
        <taxon>Bacilli</taxon>
        <taxon>Bacillales</taxon>
        <taxon>Staphylococcaceae</taxon>
        <taxon>Staphylococcus</taxon>
    </lineage>
</organism>
<dbReference type="EC" id="6.5.1.2" evidence="1"/>
<dbReference type="EMBL" id="CP000736">
    <property type="protein sequence ID" value="ABR52827.1"/>
    <property type="molecule type" value="Genomic_DNA"/>
</dbReference>
<dbReference type="SMR" id="A6U309"/>
<dbReference type="KEGG" id="sah:SaurJH1_1993"/>
<dbReference type="HOGENOM" id="CLU_007764_2_1_9"/>
<dbReference type="GO" id="GO:0005829">
    <property type="term" value="C:cytosol"/>
    <property type="evidence" value="ECO:0007669"/>
    <property type="project" value="TreeGrafter"/>
</dbReference>
<dbReference type="GO" id="GO:0003677">
    <property type="term" value="F:DNA binding"/>
    <property type="evidence" value="ECO:0007669"/>
    <property type="project" value="InterPro"/>
</dbReference>
<dbReference type="GO" id="GO:0003911">
    <property type="term" value="F:DNA ligase (NAD+) activity"/>
    <property type="evidence" value="ECO:0007669"/>
    <property type="project" value="UniProtKB-UniRule"/>
</dbReference>
<dbReference type="GO" id="GO:0046872">
    <property type="term" value="F:metal ion binding"/>
    <property type="evidence" value="ECO:0007669"/>
    <property type="project" value="UniProtKB-KW"/>
</dbReference>
<dbReference type="GO" id="GO:0006281">
    <property type="term" value="P:DNA repair"/>
    <property type="evidence" value="ECO:0007669"/>
    <property type="project" value="UniProtKB-KW"/>
</dbReference>
<dbReference type="GO" id="GO:0006260">
    <property type="term" value="P:DNA replication"/>
    <property type="evidence" value="ECO:0007669"/>
    <property type="project" value="UniProtKB-KW"/>
</dbReference>
<dbReference type="CDD" id="cd17748">
    <property type="entry name" value="BRCT_DNA_ligase_like"/>
    <property type="match status" value="1"/>
</dbReference>
<dbReference type="CDD" id="cd00114">
    <property type="entry name" value="LIGANc"/>
    <property type="match status" value="1"/>
</dbReference>
<dbReference type="FunFam" id="1.10.150.20:FF:000006">
    <property type="entry name" value="DNA ligase"/>
    <property type="match status" value="1"/>
</dbReference>
<dbReference type="FunFam" id="1.10.150.20:FF:000007">
    <property type="entry name" value="DNA ligase"/>
    <property type="match status" value="1"/>
</dbReference>
<dbReference type="FunFam" id="1.10.287.610:FF:000005">
    <property type="entry name" value="DNA ligase"/>
    <property type="match status" value="1"/>
</dbReference>
<dbReference type="FunFam" id="2.40.50.140:FF:000012">
    <property type="entry name" value="DNA ligase"/>
    <property type="match status" value="1"/>
</dbReference>
<dbReference type="FunFam" id="3.30.470.30:FF:000001">
    <property type="entry name" value="DNA ligase"/>
    <property type="match status" value="1"/>
</dbReference>
<dbReference type="FunFam" id="3.40.50.10190:FF:000045">
    <property type="entry name" value="DNA ligase"/>
    <property type="match status" value="1"/>
</dbReference>
<dbReference type="FunFam" id="6.20.10.30:FF:000002">
    <property type="entry name" value="DNA ligase"/>
    <property type="match status" value="1"/>
</dbReference>
<dbReference type="Gene3D" id="6.20.10.30">
    <property type="match status" value="1"/>
</dbReference>
<dbReference type="Gene3D" id="1.10.150.20">
    <property type="entry name" value="5' to 3' exonuclease, C-terminal subdomain"/>
    <property type="match status" value="2"/>
</dbReference>
<dbReference type="Gene3D" id="3.40.50.10190">
    <property type="entry name" value="BRCT domain"/>
    <property type="match status" value="1"/>
</dbReference>
<dbReference type="Gene3D" id="3.30.470.30">
    <property type="entry name" value="DNA ligase/mRNA capping enzyme"/>
    <property type="match status" value="1"/>
</dbReference>
<dbReference type="Gene3D" id="1.10.287.610">
    <property type="entry name" value="Helix hairpin bin"/>
    <property type="match status" value="1"/>
</dbReference>
<dbReference type="Gene3D" id="2.40.50.140">
    <property type="entry name" value="Nucleic acid-binding proteins"/>
    <property type="match status" value="1"/>
</dbReference>
<dbReference type="HAMAP" id="MF_01588">
    <property type="entry name" value="DNA_ligase_A"/>
    <property type="match status" value="1"/>
</dbReference>
<dbReference type="InterPro" id="IPR001357">
    <property type="entry name" value="BRCT_dom"/>
</dbReference>
<dbReference type="InterPro" id="IPR036420">
    <property type="entry name" value="BRCT_dom_sf"/>
</dbReference>
<dbReference type="InterPro" id="IPR041663">
    <property type="entry name" value="DisA/LigA_HHH"/>
</dbReference>
<dbReference type="InterPro" id="IPR001679">
    <property type="entry name" value="DNA_ligase"/>
</dbReference>
<dbReference type="InterPro" id="IPR018239">
    <property type="entry name" value="DNA_ligase_AS"/>
</dbReference>
<dbReference type="InterPro" id="IPR033136">
    <property type="entry name" value="DNA_ligase_CS"/>
</dbReference>
<dbReference type="InterPro" id="IPR013839">
    <property type="entry name" value="DNAligase_adenylation"/>
</dbReference>
<dbReference type="InterPro" id="IPR013840">
    <property type="entry name" value="DNAligase_N"/>
</dbReference>
<dbReference type="InterPro" id="IPR003583">
    <property type="entry name" value="Hlx-hairpin-Hlx_DNA-bd_motif"/>
</dbReference>
<dbReference type="InterPro" id="IPR012340">
    <property type="entry name" value="NA-bd_OB-fold"/>
</dbReference>
<dbReference type="InterPro" id="IPR004150">
    <property type="entry name" value="NAD_DNA_ligase_OB"/>
</dbReference>
<dbReference type="InterPro" id="IPR010994">
    <property type="entry name" value="RuvA_2-like"/>
</dbReference>
<dbReference type="InterPro" id="IPR004149">
    <property type="entry name" value="Znf_DNAligase_C4"/>
</dbReference>
<dbReference type="NCBIfam" id="TIGR00575">
    <property type="entry name" value="dnlj"/>
    <property type="match status" value="1"/>
</dbReference>
<dbReference type="NCBIfam" id="NF005932">
    <property type="entry name" value="PRK07956.1"/>
    <property type="match status" value="1"/>
</dbReference>
<dbReference type="PANTHER" id="PTHR23389">
    <property type="entry name" value="CHROMOSOME TRANSMISSION FIDELITY FACTOR 18"/>
    <property type="match status" value="1"/>
</dbReference>
<dbReference type="PANTHER" id="PTHR23389:SF9">
    <property type="entry name" value="DNA LIGASE"/>
    <property type="match status" value="1"/>
</dbReference>
<dbReference type="Pfam" id="PF00533">
    <property type="entry name" value="BRCT"/>
    <property type="match status" value="1"/>
</dbReference>
<dbReference type="Pfam" id="PF01653">
    <property type="entry name" value="DNA_ligase_aden"/>
    <property type="match status" value="1"/>
</dbReference>
<dbReference type="Pfam" id="PF03120">
    <property type="entry name" value="DNA_ligase_OB"/>
    <property type="match status" value="1"/>
</dbReference>
<dbReference type="Pfam" id="PF03119">
    <property type="entry name" value="DNA_ligase_ZBD"/>
    <property type="match status" value="1"/>
</dbReference>
<dbReference type="Pfam" id="PF12826">
    <property type="entry name" value="HHH_2"/>
    <property type="match status" value="1"/>
</dbReference>
<dbReference type="PIRSF" id="PIRSF001604">
    <property type="entry name" value="LigA"/>
    <property type="match status" value="1"/>
</dbReference>
<dbReference type="SMART" id="SM00292">
    <property type="entry name" value="BRCT"/>
    <property type="match status" value="1"/>
</dbReference>
<dbReference type="SMART" id="SM00278">
    <property type="entry name" value="HhH1"/>
    <property type="match status" value="3"/>
</dbReference>
<dbReference type="SMART" id="SM00532">
    <property type="entry name" value="LIGANc"/>
    <property type="match status" value="1"/>
</dbReference>
<dbReference type="SUPFAM" id="SSF52113">
    <property type="entry name" value="BRCT domain"/>
    <property type="match status" value="1"/>
</dbReference>
<dbReference type="SUPFAM" id="SSF56091">
    <property type="entry name" value="DNA ligase/mRNA capping enzyme, catalytic domain"/>
    <property type="match status" value="1"/>
</dbReference>
<dbReference type="SUPFAM" id="SSF50249">
    <property type="entry name" value="Nucleic acid-binding proteins"/>
    <property type="match status" value="1"/>
</dbReference>
<dbReference type="SUPFAM" id="SSF47781">
    <property type="entry name" value="RuvA domain 2-like"/>
    <property type="match status" value="1"/>
</dbReference>
<dbReference type="PROSITE" id="PS50172">
    <property type="entry name" value="BRCT"/>
    <property type="match status" value="1"/>
</dbReference>
<dbReference type="PROSITE" id="PS01055">
    <property type="entry name" value="DNA_LIGASE_N1"/>
    <property type="match status" value="1"/>
</dbReference>
<dbReference type="PROSITE" id="PS01056">
    <property type="entry name" value="DNA_LIGASE_N2"/>
    <property type="match status" value="1"/>
</dbReference>